<name>TXF1A_SCOMU</name>
<reference key="1">
    <citation type="journal article" date="2018" name="Proc. Natl. Acad. Sci. U.S.A.">
        <title>Centipedes subdue giant prey by blocking KCNQ channels.</title>
        <authorList>
            <person name="Luo L."/>
            <person name="Li B."/>
            <person name="Wang S."/>
            <person name="Wu F."/>
            <person name="Wang X."/>
            <person name="Liang P."/>
            <person name="Ombati R."/>
            <person name="Chen J."/>
            <person name="Lu X."/>
            <person name="Cui J."/>
            <person name="Lu Q."/>
            <person name="Zhang L."/>
            <person name="Zhou M."/>
            <person name="Tian C."/>
            <person name="Yang S."/>
            <person name="Lai R."/>
        </authorList>
    </citation>
    <scope>NUCLEOTIDE SEQUENCE [MRNA]</scope>
    <scope>PROTEIN SEQUENCE OF 24-76</scope>
    <scope>STRUCTURE BY NMR OF 24-76</scope>
    <scope>FUNCTION</scope>
    <scope>SUBCELLULAR LOCATION</scope>
    <scope>MASS SPECTROMETRY</scope>
    <scope>TOXIC DOSE</scope>
    <scope>DISULFIDE BONDS</scope>
    <scope>MUTAGENESIS OF LYS-27; LYS-28; ASP-29; LYS-33; LYS-34; ARG-35; LYS-36; LYS-40; GLU-42; LYS-45; ASP-55; GLU-56; ARG-58; GLU-61; LYS-63 AND LYS-68</scope>
    <source>
        <tissue>Venom</tissue>
        <tissue>Venom gland</tissue>
    </source>
</reference>
<feature type="signal peptide" evidence="1">
    <location>
        <begin position="1"/>
        <end position="23"/>
    </location>
</feature>
<feature type="chain" id="PRO_0000444563" description="Mu-scoloptoxin(15)-Ssm1a" evidence="1">
    <location>
        <begin position="24"/>
        <end position="76"/>
    </location>
</feature>
<feature type="region of interest" description="Important for inhibition of KCNQ4" evidence="1">
    <location>
        <begin position="33"/>
        <end position="36"/>
    </location>
</feature>
<feature type="site" description="Important for inhibition of KCNQ4" evidence="1">
    <location>
        <position position="27"/>
    </location>
</feature>
<feature type="site" description="Important for inhibition of KCNQ4" evidence="1">
    <location>
        <position position="68"/>
    </location>
</feature>
<feature type="disulfide bond" evidence="1 5">
    <location>
        <begin position="43"/>
        <end position="69"/>
    </location>
</feature>
<feature type="disulfide bond" evidence="1 5">
    <location>
        <begin position="47"/>
        <end position="71"/>
    </location>
</feature>
<feature type="mutagenesis site" description="Reduced inhibition of KCNQ4." evidence="1">
    <original>K</original>
    <variation>A</variation>
    <location>
        <position position="27"/>
    </location>
</feature>
<feature type="mutagenesis site" description="No effect on inhibition of KCNQ4." evidence="1">
    <original>K</original>
    <variation>A</variation>
    <location>
        <position position="28"/>
    </location>
</feature>
<feature type="mutagenesis site" description="No effect on inhibition of KCNQ4." evidence="1">
    <original>D</original>
    <variation>A</variation>
    <location>
        <position position="29"/>
    </location>
</feature>
<feature type="mutagenesis site" description="Reduced inhibition of KCNQ4." evidence="1">
    <original>K</original>
    <variation>A</variation>
    <location>
        <position position="33"/>
    </location>
</feature>
<feature type="mutagenesis site" description="Reduced inhibition of KCNQ4." evidence="1">
    <original>K</original>
    <variation>A</variation>
    <location>
        <position position="34"/>
    </location>
</feature>
<feature type="mutagenesis site" description="Severely reduced inhibition of KCNQ4 (IC(50)=104.7 uM)." evidence="1">
    <original>R</original>
    <variation>A</variation>
    <location>
        <position position="35"/>
    </location>
</feature>
<feature type="mutagenesis site" description="No effect on inhibition of KCNQ4." evidence="1">
    <original>R</original>
    <variation>K</variation>
    <location>
        <position position="35"/>
    </location>
</feature>
<feature type="mutagenesis site" description="Severaly reduced inhibition of KCNQ4 (IC(50)=117.5 uM)." evidence="1">
    <original>K</original>
    <variation>A</variation>
    <location>
        <position position="36"/>
    </location>
</feature>
<feature type="mutagenesis site" description="No effect on inhibition of KCNQ4." evidence="1">
    <original>K</original>
    <variation>R</variation>
    <location>
        <position position="36"/>
    </location>
</feature>
<feature type="mutagenesis site" description="No effect on inhibition of KCNQ4." evidence="1">
    <original>K</original>
    <variation>A</variation>
    <location>
        <position position="40"/>
    </location>
</feature>
<feature type="mutagenesis site" description="No effect on inhibition of KCNQ4." evidence="1">
    <original>E</original>
    <variation>A</variation>
    <location>
        <position position="42"/>
    </location>
</feature>
<feature type="mutagenesis site" description="No effect on inhibition of KCNQ4." evidence="1">
    <original>K</original>
    <variation>A</variation>
    <location>
        <position position="45"/>
    </location>
</feature>
<feature type="mutagenesis site" description="No effect on inhibition of KCNQ4." evidence="1">
    <original>D</original>
    <variation>A</variation>
    <location>
        <position position="55"/>
    </location>
</feature>
<feature type="mutagenesis site" description="No effect on inhibition of KCNQ4." evidence="1">
    <original>E</original>
    <variation>A</variation>
    <location>
        <position position="56"/>
    </location>
</feature>
<feature type="mutagenesis site" description="No effect on inhibition of KCNQ4." evidence="1">
    <original>R</original>
    <variation>A</variation>
    <location>
        <position position="58"/>
    </location>
</feature>
<feature type="mutagenesis site" description="No effect on inhibition of KCNQ4." evidence="1">
    <original>E</original>
    <variation>A</variation>
    <location>
        <position position="61"/>
    </location>
</feature>
<feature type="mutagenesis site" description="No effect on inhibition of KCNQ4." evidence="1">
    <original>K</original>
    <variation>A</variation>
    <location>
        <position position="63"/>
    </location>
</feature>
<feature type="mutagenesis site" description="Reduced inhibition of KCNQ4." evidence="1">
    <original>K</original>
    <variation>A</variation>
    <location>
        <position position="68"/>
    </location>
</feature>
<feature type="strand" evidence="6">
    <location>
        <begin position="27"/>
        <end position="31"/>
    </location>
</feature>
<feature type="helix" evidence="6">
    <location>
        <begin position="41"/>
        <end position="49"/>
    </location>
</feature>
<feature type="strand" evidence="6">
    <location>
        <begin position="53"/>
        <end position="56"/>
    </location>
</feature>
<feature type="strand" evidence="6">
    <location>
        <begin position="60"/>
        <end position="62"/>
    </location>
</feature>
<feature type="strand" evidence="6">
    <location>
        <begin position="68"/>
        <end position="73"/>
    </location>
</feature>
<organism>
    <name type="scientific">Scolopendra mutilans</name>
    <name type="common">Chinese red-headed centipede</name>
    <name type="synonym">Scolopendra subspinipes mutilans</name>
    <dbReference type="NCBI Taxonomy" id="2836329"/>
    <lineage>
        <taxon>Eukaryota</taxon>
        <taxon>Metazoa</taxon>
        <taxon>Ecdysozoa</taxon>
        <taxon>Arthropoda</taxon>
        <taxon>Myriapoda</taxon>
        <taxon>Chilopoda</taxon>
        <taxon>Pleurostigmophora</taxon>
        <taxon>Scolopendromorpha</taxon>
        <taxon>Scolopendridae</taxon>
        <taxon>Scolopendra</taxon>
    </lineage>
</organism>
<evidence type="ECO:0000269" key="1">
    <source>
    </source>
</evidence>
<evidence type="ECO:0000303" key="2">
    <source>
    </source>
</evidence>
<evidence type="ECO:0000305" key="3"/>
<evidence type="ECO:0000305" key="4">
    <source>
    </source>
</evidence>
<evidence type="ECO:0007744" key="5">
    <source>
        <dbReference type="PDB" id="5X0S"/>
    </source>
</evidence>
<evidence type="ECO:0007829" key="6">
    <source>
        <dbReference type="PDB" id="5X0S"/>
    </source>
</evidence>
<accession>A0A2L0ART2</accession>
<accession>A0A2R2JFU4</accession>
<accession>C0HKE0</accession>
<sequence length="76" mass="8568">MEKKIIFLVFLVALLALPGFISTEVIKKDTPYKKRKFPYKSECLKACATSFTGGDESRIQEGKPGFFKCTCYFTTG</sequence>
<dbReference type="EMBL" id="MG585384">
    <property type="protein sequence ID" value="AUW64492.1"/>
    <property type="molecule type" value="mRNA"/>
</dbReference>
<dbReference type="PDB" id="5X0S">
    <property type="method" value="NMR"/>
    <property type="chains" value="A=24-76"/>
</dbReference>
<dbReference type="PDBsum" id="5X0S"/>
<dbReference type="SMR" id="A0A2L0ART2"/>
<dbReference type="GO" id="GO:0005576">
    <property type="term" value="C:extracellular region"/>
    <property type="evidence" value="ECO:0000314"/>
    <property type="project" value="UniProtKB"/>
</dbReference>
<dbReference type="GO" id="GO:0019870">
    <property type="term" value="F:potassium channel inhibitor activity"/>
    <property type="evidence" value="ECO:0000314"/>
    <property type="project" value="UniProtKB"/>
</dbReference>
<dbReference type="GO" id="GO:0090729">
    <property type="term" value="F:toxin activity"/>
    <property type="evidence" value="ECO:0000314"/>
    <property type="project" value="UniProtKB"/>
</dbReference>
<dbReference type="GO" id="GO:0044499">
    <property type="term" value="P:venom-mediated vasoconstriction in another organism"/>
    <property type="evidence" value="ECO:0000314"/>
    <property type="project" value="UniProtKB"/>
</dbReference>
<keyword id="KW-0002">3D-structure</keyword>
<keyword id="KW-0903">Direct protein sequencing</keyword>
<keyword id="KW-1015">Disulfide bond</keyword>
<keyword id="KW-0872">Ion channel impairing toxin</keyword>
<keyword id="KW-0632">Potassium channel impairing toxin</keyword>
<keyword id="KW-0964">Secreted</keyword>
<keyword id="KW-0732">Signal</keyword>
<keyword id="KW-0800">Toxin</keyword>
<keyword id="KW-1220">Voltage-gated potassium channel impairing toxin</keyword>
<proteinExistence type="evidence at protein level"/>
<comment type="function">
    <text evidence="1">Blocks voltage-gated potassium channels Kv7.4/KCNQ4 (IC(50)=2.5 uM), Kv7.1/KCNQ1 (IC(50)=2.8 uM), Kv7.2/KCNQ2 (IC(50)=2.7 uM) and Kv7.5/KCNQ5 (IC(50)=2.7 uM). Targets the pore domain, in particular negatively charged residues 'Asp-266' and 'Asp-288', of KCNQ4 and probably other KCNQ channel family members where these residues are conserved. In vivo, shows vasoconstrictive activity resulting in acute hypertension when injected intravenously in mice. Also induces coronary vasospasms ultimately leading to heart failure. Induces seizures when injected into the hippocampus of mice. Decreases respiratory rate while increasing respiratory amplitude, probably by triggering a contraction of the bronchial ring.</text>
</comment>
<comment type="subcellular location">
    <subcellularLocation>
        <location evidence="1">Secreted</location>
    </subcellularLocation>
</comment>
<comment type="tissue specificity">
    <text evidence="4">Expressed by the venom gland.</text>
</comment>
<comment type="domain">
    <text evidence="1">Has the structural arrangement of an alpha-helix connected to a beta-sheet by disulfide bonds (CSalpha/beta). Since the toxin contains only 2 disulfide bonds, it is called 2ds-CSalpha/beta.</text>
</comment>
<comment type="mass spectrometry" mass="6017.5" method="MALDI" evidence="1"/>
<comment type="toxic dose">
    <text evidence="1">LD(50) is 0.85 mg/kg when injected intravenously in mice.</text>
</comment>
<comment type="miscellaneous">
    <text evidence="1">Negative results: does not inhibit channels TRPV1 and TRPV2, voltage-gated potassium channels Kv2.1/KCNB1 and Kv4.1/KCND1, hERG, tetrodotoxin (TTX)-sensitive and TTX-insensitive sodium channels in DRG neurons or voltage-gated calcium channels in DRG neurons.</text>
</comment>
<comment type="similarity">
    <text evidence="3">Belongs to the scoloptoxin-15 family.</text>
</comment>
<protein>
    <recommendedName>
        <fullName evidence="3">Mu-scoloptoxin(15)-Ssm1a</fullName>
        <shortName evidence="3">Mu-SLPTX(15)-Ssm1a</shortName>
    </recommendedName>
    <alternativeName>
        <fullName evidence="2">Potassium channel toxin SsTx</fullName>
    </alternativeName>
    <alternativeName>
        <fullName evidence="2">Ssm spooky toxin</fullName>
    </alternativeName>
</protein>